<gene>
    <name evidence="1" type="primary">tolB</name>
    <name type="ordered locus">c0819</name>
</gene>
<feature type="signal peptide" evidence="1">
    <location>
        <begin position="1"/>
        <end position="21"/>
    </location>
</feature>
<feature type="chain" id="PRO_0000034649" description="Tol-Pal system protein TolB" evidence="1">
    <location>
        <begin position="22"/>
        <end position="430"/>
    </location>
</feature>
<proteinExistence type="inferred from homology"/>
<name>TOLB_ECOL6</name>
<dbReference type="EMBL" id="AE014075">
    <property type="protein sequence ID" value="AAN79292.1"/>
    <property type="status" value="ALT_INIT"/>
    <property type="molecule type" value="Genomic_DNA"/>
</dbReference>
<dbReference type="RefSeq" id="WP_001295307.1">
    <property type="nucleotide sequence ID" value="NZ_CP051263.1"/>
</dbReference>
<dbReference type="SMR" id="P0A856"/>
<dbReference type="STRING" id="199310.c0819"/>
<dbReference type="GeneID" id="93776744"/>
<dbReference type="KEGG" id="ecc:c0819"/>
<dbReference type="eggNOG" id="COG0823">
    <property type="taxonomic scope" value="Bacteria"/>
</dbReference>
<dbReference type="HOGENOM" id="CLU_047123_0_0_6"/>
<dbReference type="Proteomes" id="UP000001410">
    <property type="component" value="Chromosome"/>
</dbReference>
<dbReference type="GO" id="GO:0042597">
    <property type="term" value="C:periplasmic space"/>
    <property type="evidence" value="ECO:0007669"/>
    <property type="project" value="UniProtKB-SubCell"/>
</dbReference>
<dbReference type="GO" id="GO:0051301">
    <property type="term" value="P:cell division"/>
    <property type="evidence" value="ECO:0007669"/>
    <property type="project" value="UniProtKB-UniRule"/>
</dbReference>
<dbReference type="GO" id="GO:0017038">
    <property type="term" value="P:protein import"/>
    <property type="evidence" value="ECO:0007669"/>
    <property type="project" value="InterPro"/>
</dbReference>
<dbReference type="FunFam" id="2.120.10.30:FF:000022">
    <property type="entry name" value="Tol-Pal system protein TolB"/>
    <property type="match status" value="1"/>
</dbReference>
<dbReference type="FunFam" id="3.40.50.10070:FF:000001">
    <property type="entry name" value="Tol-Pal system protein TolB"/>
    <property type="match status" value="1"/>
</dbReference>
<dbReference type="Gene3D" id="2.120.10.30">
    <property type="entry name" value="TolB, C-terminal domain"/>
    <property type="match status" value="1"/>
</dbReference>
<dbReference type="Gene3D" id="3.40.50.10070">
    <property type="entry name" value="TolB, N-terminal domain"/>
    <property type="match status" value="1"/>
</dbReference>
<dbReference type="HAMAP" id="MF_00671">
    <property type="entry name" value="TolB"/>
    <property type="match status" value="1"/>
</dbReference>
<dbReference type="InterPro" id="IPR011042">
    <property type="entry name" value="6-blade_b-propeller_TolB-like"/>
</dbReference>
<dbReference type="InterPro" id="IPR011659">
    <property type="entry name" value="PD40"/>
</dbReference>
<dbReference type="InterPro" id="IPR014167">
    <property type="entry name" value="Tol-Pal_TolB"/>
</dbReference>
<dbReference type="InterPro" id="IPR007195">
    <property type="entry name" value="TolB_N"/>
</dbReference>
<dbReference type="NCBIfam" id="TIGR02800">
    <property type="entry name" value="propeller_TolB"/>
    <property type="match status" value="1"/>
</dbReference>
<dbReference type="PANTHER" id="PTHR36842:SF1">
    <property type="entry name" value="PROTEIN TOLB"/>
    <property type="match status" value="1"/>
</dbReference>
<dbReference type="PANTHER" id="PTHR36842">
    <property type="entry name" value="PROTEIN TOLB HOMOLOG"/>
    <property type="match status" value="1"/>
</dbReference>
<dbReference type="Pfam" id="PF07676">
    <property type="entry name" value="PD40"/>
    <property type="match status" value="4"/>
</dbReference>
<dbReference type="Pfam" id="PF04052">
    <property type="entry name" value="TolB_N"/>
    <property type="match status" value="1"/>
</dbReference>
<dbReference type="SUPFAM" id="SSF52964">
    <property type="entry name" value="TolB, N-terminal domain"/>
    <property type="match status" value="1"/>
</dbReference>
<dbReference type="SUPFAM" id="SSF69304">
    <property type="entry name" value="Tricorn protease N-terminal domain"/>
    <property type="match status" value="1"/>
</dbReference>
<protein>
    <recommendedName>
        <fullName evidence="1">Tol-Pal system protein TolB</fullName>
    </recommendedName>
</protein>
<organism>
    <name type="scientific">Escherichia coli O6:H1 (strain CFT073 / ATCC 700928 / UPEC)</name>
    <dbReference type="NCBI Taxonomy" id="199310"/>
    <lineage>
        <taxon>Bacteria</taxon>
        <taxon>Pseudomonadati</taxon>
        <taxon>Pseudomonadota</taxon>
        <taxon>Gammaproteobacteria</taxon>
        <taxon>Enterobacterales</taxon>
        <taxon>Enterobacteriaceae</taxon>
        <taxon>Escherichia</taxon>
    </lineage>
</organism>
<keyword id="KW-0131">Cell cycle</keyword>
<keyword id="KW-0132">Cell division</keyword>
<keyword id="KW-0574">Periplasm</keyword>
<keyword id="KW-1185">Reference proteome</keyword>
<keyword id="KW-0732">Signal</keyword>
<comment type="function">
    <text evidence="1">Part of the Tol-Pal system, which plays a role in outer membrane invagination during cell division and is important for maintaining outer membrane integrity. TolB occupies a key intermediary position in the Tol-Pal system because it communicates directly with both membrane-embedded components, Pal in the outer membrane and TolA in the inner membrane.</text>
</comment>
<comment type="subunit">
    <text evidence="1">The Tol-Pal system is composed of five core proteins: the inner membrane proteins TolA, TolQ and TolR, the periplasmic protein TolB and the outer membrane protein Pal. They form a network linking the inner and outer membranes and the peptidoglycan layer.</text>
</comment>
<comment type="subcellular location">
    <subcellularLocation>
        <location evidence="1">Periplasm</location>
    </subcellularLocation>
</comment>
<comment type="similarity">
    <text evidence="1 2">Belongs to the TolB family.</text>
</comment>
<comment type="sequence caution" evidence="2">
    <conflict type="erroneous initiation">
        <sequence resource="EMBL-CDS" id="AAN79292"/>
    </conflict>
</comment>
<accession>P0A856</accession>
<accession>P19935</accession>
<reference key="1">
    <citation type="journal article" date="2002" name="Proc. Natl. Acad. Sci. U.S.A.">
        <title>Extensive mosaic structure revealed by the complete genome sequence of uropathogenic Escherichia coli.</title>
        <authorList>
            <person name="Welch R.A."/>
            <person name="Burland V."/>
            <person name="Plunkett G. III"/>
            <person name="Redford P."/>
            <person name="Roesch P."/>
            <person name="Rasko D."/>
            <person name="Buckles E.L."/>
            <person name="Liou S.-R."/>
            <person name="Boutin A."/>
            <person name="Hackett J."/>
            <person name="Stroud D."/>
            <person name="Mayhew G.F."/>
            <person name="Rose D.J."/>
            <person name="Zhou S."/>
            <person name="Schwartz D.C."/>
            <person name="Perna N.T."/>
            <person name="Mobley H.L.T."/>
            <person name="Donnenberg M.S."/>
            <person name="Blattner F.R."/>
        </authorList>
    </citation>
    <scope>NUCLEOTIDE SEQUENCE [LARGE SCALE GENOMIC DNA]</scope>
    <source>
        <strain>CFT073 / ATCC 700928 / UPEC</strain>
    </source>
</reference>
<sequence>MKQALRVAFGFLILWASVLHAEVRIVIDSGVDSGRPIGVVPFQWAGPGAAPEDIGGIVAADLRNSGKFNPLDRARLPQQPGSAQEVQPAAWSALGIDAVVVGQVTPNPDGSYNVAYQLVDTGGAPGTVLAQNSYKVNKQWLRYAGHTASDEVFEKLTGIKGAFRTRIAYVVQTNGGQFPYELRVSDYDGYNQFVVHRSPQPLMSPAWSPDGSKLAYVTFESGRSALVIQTLANGAVRQVASFPRHNGAPAFSPDGSKLAFALSKTGSLNLYVMDLASGQIRQVTDGRSNNTEPTWFPDSQNLAFTSDQAGRPQVYKVNINGGAPQRITWEGSQNQDADVSSDGKFMVMVSSNGGQQHIAKQDLATGGVQVLSSTFLDETPSLAPNGTMVIYSSSQGMGSVLNLVSTDGRFKARLPATDGQVKFPAWSPYL</sequence>
<evidence type="ECO:0000255" key="1">
    <source>
        <dbReference type="HAMAP-Rule" id="MF_00671"/>
    </source>
</evidence>
<evidence type="ECO:0000305" key="2"/>